<evidence type="ECO:0000305" key="1"/>
<protein>
    <recommendedName>
        <fullName>Uncharacterized protein XF_0523</fullName>
    </recommendedName>
    <alternativeName>
        <fullName>Protein F14</fullName>
    </alternativeName>
</protein>
<feature type="chain" id="PRO_0000220274" description="Uncharacterized protein XF_0523">
    <location>
        <begin position="1"/>
        <end position="480"/>
    </location>
</feature>
<reference key="1">
    <citation type="journal article" date="2000" name="Nature">
        <title>The genome sequence of the plant pathogen Xylella fastidiosa.</title>
        <authorList>
            <person name="Simpson A.J.G."/>
            <person name="Reinach F.C."/>
            <person name="Arruda P."/>
            <person name="Abreu F.A."/>
            <person name="Acencio M."/>
            <person name="Alvarenga R."/>
            <person name="Alves L.M.C."/>
            <person name="Araya J.E."/>
            <person name="Baia G.S."/>
            <person name="Baptista C.S."/>
            <person name="Barros M.H."/>
            <person name="Bonaccorsi E.D."/>
            <person name="Bordin S."/>
            <person name="Bove J.M."/>
            <person name="Briones M.R.S."/>
            <person name="Bueno M.R.P."/>
            <person name="Camargo A.A."/>
            <person name="Camargo L.E.A."/>
            <person name="Carraro D.M."/>
            <person name="Carrer H."/>
            <person name="Colauto N.B."/>
            <person name="Colombo C."/>
            <person name="Costa F.F."/>
            <person name="Costa M.C.R."/>
            <person name="Costa-Neto C.M."/>
            <person name="Coutinho L.L."/>
            <person name="Cristofani M."/>
            <person name="Dias-Neto E."/>
            <person name="Docena C."/>
            <person name="El-Dorry H."/>
            <person name="Facincani A.P."/>
            <person name="Ferreira A.J.S."/>
            <person name="Ferreira V.C.A."/>
            <person name="Ferro J.A."/>
            <person name="Fraga J.S."/>
            <person name="Franca S.C."/>
            <person name="Franco M.C."/>
            <person name="Frohme M."/>
            <person name="Furlan L.R."/>
            <person name="Garnier M."/>
            <person name="Goldman G.H."/>
            <person name="Goldman M.H.S."/>
            <person name="Gomes S.L."/>
            <person name="Gruber A."/>
            <person name="Ho P.L."/>
            <person name="Hoheisel J.D."/>
            <person name="Junqueira M.L."/>
            <person name="Kemper E.L."/>
            <person name="Kitajima J.P."/>
            <person name="Krieger J.E."/>
            <person name="Kuramae E.E."/>
            <person name="Laigret F."/>
            <person name="Lambais M.R."/>
            <person name="Leite L.C.C."/>
            <person name="Lemos E.G.M."/>
            <person name="Lemos M.V.F."/>
            <person name="Lopes S.A."/>
            <person name="Lopes C.R."/>
            <person name="Machado J.A."/>
            <person name="Machado M.A."/>
            <person name="Madeira A.M.B.N."/>
            <person name="Madeira H.M.F."/>
            <person name="Marino C.L."/>
            <person name="Marques M.V."/>
            <person name="Martins E.A.L."/>
            <person name="Martins E.M.F."/>
            <person name="Matsukuma A.Y."/>
            <person name="Menck C.F.M."/>
            <person name="Miracca E.C."/>
            <person name="Miyaki C.Y."/>
            <person name="Monteiro-Vitorello C.B."/>
            <person name="Moon D.H."/>
            <person name="Nagai M.A."/>
            <person name="Nascimento A.L.T.O."/>
            <person name="Netto L.E.S."/>
            <person name="Nhani A. Jr."/>
            <person name="Nobrega F.G."/>
            <person name="Nunes L.R."/>
            <person name="Oliveira M.A."/>
            <person name="de Oliveira M.C."/>
            <person name="de Oliveira R.C."/>
            <person name="Palmieri D.A."/>
            <person name="Paris A."/>
            <person name="Peixoto B.R."/>
            <person name="Pereira G.A.G."/>
            <person name="Pereira H.A. Jr."/>
            <person name="Pesquero J.B."/>
            <person name="Quaggio R.B."/>
            <person name="Roberto P.G."/>
            <person name="Rodrigues V."/>
            <person name="de Rosa A.J.M."/>
            <person name="de Rosa V.E. Jr."/>
            <person name="de Sa R.G."/>
            <person name="Santelli R.V."/>
            <person name="Sawasaki H.E."/>
            <person name="da Silva A.C.R."/>
            <person name="da Silva A.M."/>
            <person name="da Silva F.R."/>
            <person name="Silva W.A. Jr."/>
            <person name="da Silveira J.F."/>
            <person name="Silvestri M.L.Z."/>
            <person name="Siqueira W.J."/>
            <person name="de Souza A.A."/>
            <person name="de Souza A.P."/>
            <person name="Terenzi M.F."/>
            <person name="Truffi D."/>
            <person name="Tsai S.M."/>
            <person name="Tsuhako M.H."/>
            <person name="Vallada H."/>
            <person name="Van Sluys M.A."/>
            <person name="Verjovski-Almeida S."/>
            <person name="Vettore A.L."/>
            <person name="Zago M.A."/>
            <person name="Zatz M."/>
            <person name="Meidanis J."/>
            <person name="Setubal J.C."/>
        </authorList>
    </citation>
    <scope>NUCLEOTIDE SEQUENCE [LARGE SCALE GENOMIC DNA]</scope>
    <source>
        <strain>9a5c</strain>
    </source>
</reference>
<reference key="2">
    <citation type="submission" date="1998-03" db="EMBL/GenBank/DDBJ databases">
        <authorList>
            <person name="Ferreira H."/>
            <person name="Rodrigues Neto J."/>
            <person name="Rosato Y.B."/>
        </authorList>
    </citation>
    <scope>PRELIMINARY NUCLEOTIDE SEQUENCE [GENOMIC DNA] OF 190-410</scope>
    <source>
        <strain>CCT 5452</strain>
    </source>
</reference>
<name>Y523_XYLFA</name>
<gene>
    <name type="ordered locus">XF_0523</name>
</gene>
<dbReference type="EMBL" id="AE003849">
    <property type="protein sequence ID" value="AAF83333.1"/>
    <property type="molecule type" value="Genomic_DNA"/>
</dbReference>
<dbReference type="EMBL" id="AF052587">
    <property type="protein sequence ID" value="AAC12635.1"/>
    <property type="status" value="ALT_FRAME"/>
    <property type="molecule type" value="Genomic_DNA"/>
</dbReference>
<dbReference type="PIR" id="F82796">
    <property type="entry name" value="F82796"/>
</dbReference>
<dbReference type="RefSeq" id="WP_010893051.1">
    <property type="nucleotide sequence ID" value="NC_002488.3"/>
</dbReference>
<dbReference type="STRING" id="160492.XF_0523"/>
<dbReference type="KEGG" id="xfa:XF_0523"/>
<dbReference type="PATRIC" id="fig|160492.11.peg.561"/>
<dbReference type="eggNOG" id="COG5449">
    <property type="taxonomic scope" value="Bacteria"/>
</dbReference>
<dbReference type="HOGENOM" id="CLU_568521_0_0_6"/>
<dbReference type="Proteomes" id="UP000000812">
    <property type="component" value="Chromosome"/>
</dbReference>
<dbReference type="InterPro" id="IPR018964">
    <property type="entry name" value="Phage_phiJL001_Gp84_C"/>
</dbReference>
<dbReference type="Pfam" id="PF09356">
    <property type="entry name" value="Phage_BR0599"/>
    <property type="match status" value="1"/>
</dbReference>
<comment type="sequence caution" evidence="1">
    <conflict type="frameshift">
        <sequence resource="EMBL-CDS" id="AAC12635"/>
    </conflict>
</comment>
<organism>
    <name type="scientific">Xylella fastidiosa (strain 9a5c)</name>
    <dbReference type="NCBI Taxonomy" id="160492"/>
    <lineage>
        <taxon>Bacteria</taxon>
        <taxon>Pseudomonadati</taxon>
        <taxon>Pseudomonadota</taxon>
        <taxon>Gammaproteobacteria</taxon>
        <taxon>Lysobacterales</taxon>
        <taxon>Lysobacteraceae</taxon>
        <taxon>Xylella</taxon>
    </lineage>
</organism>
<proteinExistence type="predicted"/>
<accession>O68639</accession>
<accession>Q9PFY3</accession>
<sequence>MSFSAFELGRFTGRPVRLFVFTRQHLTWRFANSDRDIVSGGFTYLAARIDRSDIQHTTEREKDQITITFPYLLNPAADPLPVTQALGNQWRPYHPVDVIRVVCMVMHVGDTDPPQVEWVGRVIQPRLSDTEMELTCAPHSSIALARNQGAKFQTSCWKTVYSTGLRGCNLSPGAHRVTGRVARLEQLPTDPPQGAHVLVPDMAAHLAPLAGQVATWTYEAQVPHSGTVASVLKFHVRLNNVTAIAVGTVLHWTAADGIAHHGTVTGLFGTVAVLNTTEGITAGSVCHWSVAEARQGTATILQAYHAYDWVSQAAGGSSSGFSWDDASGLHDAHSGTAWSVTYTRRSALVLSDVTGLEEGSSITVALSGSGVSGTLSAVAGLQLTAAHFASAAYSLEGGTLTYTDANGLLIRRSIASHTLGSTTLTLSAGGPNPVVNDAVTVLPTCPRTWDACAARGNTIHFGGAVYRPLHTPDGVSMSWG</sequence>